<keyword id="KW-0686">Riboflavin biosynthesis</keyword>
<keyword id="KW-0808">Transferase</keyword>
<gene>
    <name evidence="1" type="primary">ribH</name>
    <name type="ordered locus">NT01EI_1057</name>
</gene>
<feature type="chain" id="PRO_1000203790" description="6,7-dimethyl-8-ribityllumazine synthase">
    <location>
        <begin position="1"/>
        <end position="156"/>
    </location>
</feature>
<feature type="active site" description="Proton donor" evidence="1">
    <location>
        <position position="89"/>
    </location>
</feature>
<feature type="binding site" evidence="1">
    <location>
        <position position="22"/>
    </location>
    <ligand>
        <name>5-amino-6-(D-ribitylamino)uracil</name>
        <dbReference type="ChEBI" id="CHEBI:15934"/>
    </ligand>
</feature>
<feature type="binding site" evidence="1">
    <location>
        <begin position="57"/>
        <end position="59"/>
    </location>
    <ligand>
        <name>5-amino-6-(D-ribitylamino)uracil</name>
        <dbReference type="ChEBI" id="CHEBI:15934"/>
    </ligand>
</feature>
<feature type="binding site" evidence="1">
    <location>
        <begin position="81"/>
        <end position="83"/>
    </location>
    <ligand>
        <name>5-amino-6-(D-ribitylamino)uracil</name>
        <dbReference type="ChEBI" id="CHEBI:15934"/>
    </ligand>
</feature>
<feature type="binding site" evidence="1">
    <location>
        <begin position="86"/>
        <end position="87"/>
    </location>
    <ligand>
        <name>(2S)-2-hydroxy-3-oxobutyl phosphate</name>
        <dbReference type="ChEBI" id="CHEBI:58830"/>
    </ligand>
</feature>
<feature type="binding site" evidence="1">
    <location>
        <position position="114"/>
    </location>
    <ligand>
        <name>5-amino-6-(D-ribitylamino)uracil</name>
        <dbReference type="ChEBI" id="CHEBI:15934"/>
    </ligand>
</feature>
<feature type="binding site" evidence="1">
    <location>
        <position position="128"/>
    </location>
    <ligand>
        <name>(2S)-2-hydroxy-3-oxobutyl phosphate</name>
        <dbReference type="ChEBI" id="CHEBI:58830"/>
    </ligand>
</feature>
<evidence type="ECO:0000255" key="1">
    <source>
        <dbReference type="HAMAP-Rule" id="MF_00178"/>
    </source>
</evidence>
<protein>
    <recommendedName>
        <fullName evidence="1">6,7-dimethyl-8-ribityllumazine synthase</fullName>
        <shortName evidence="1">DMRL synthase</shortName>
        <shortName evidence="1">LS</shortName>
        <shortName evidence="1">Lumazine synthase</shortName>
        <ecNumber evidence="1">2.5.1.78</ecNumber>
    </recommendedName>
</protein>
<sequence>MKTIQGVVAAPQARVAIAISRFNHFINDSLLEGAIDALKRIGQVSDENITVVWVPGAYELPLTVRALASSGRYDAVVALGTVIRGGTAHFEFVAGECSSGLASVALNTDVPVAFGVLTTETIEQAIDRAGAKAGNKGAEAALTALEMINVLKAIKA</sequence>
<reference key="1">
    <citation type="submission" date="2009-03" db="EMBL/GenBank/DDBJ databases">
        <title>Complete genome sequence of Edwardsiella ictaluri 93-146.</title>
        <authorList>
            <person name="Williams M.L."/>
            <person name="Gillaspy A.F."/>
            <person name="Dyer D.W."/>
            <person name="Thune R.L."/>
            <person name="Waldbieser G.C."/>
            <person name="Schuster S.C."/>
            <person name="Gipson J."/>
            <person name="Zaitshik J."/>
            <person name="Landry C."/>
            <person name="Lawrence M.L."/>
        </authorList>
    </citation>
    <scope>NUCLEOTIDE SEQUENCE [LARGE SCALE GENOMIC DNA]</scope>
    <source>
        <strain>93-146</strain>
    </source>
</reference>
<organism>
    <name type="scientific">Edwardsiella ictaluri (strain 93-146)</name>
    <dbReference type="NCBI Taxonomy" id="634503"/>
    <lineage>
        <taxon>Bacteria</taxon>
        <taxon>Pseudomonadati</taxon>
        <taxon>Pseudomonadota</taxon>
        <taxon>Gammaproteobacteria</taxon>
        <taxon>Enterobacterales</taxon>
        <taxon>Hafniaceae</taxon>
        <taxon>Edwardsiella</taxon>
    </lineage>
</organism>
<dbReference type="EC" id="2.5.1.78" evidence="1"/>
<dbReference type="EMBL" id="CP001600">
    <property type="protein sequence ID" value="ACR68269.1"/>
    <property type="molecule type" value="Genomic_DNA"/>
</dbReference>
<dbReference type="SMR" id="C5BCH5"/>
<dbReference type="STRING" id="67780.B6E78_15655"/>
<dbReference type="KEGG" id="eic:NT01EI_1057"/>
<dbReference type="PATRIC" id="fig|634503.3.peg.957"/>
<dbReference type="HOGENOM" id="CLU_089358_1_1_6"/>
<dbReference type="OrthoDB" id="9809709at2"/>
<dbReference type="UniPathway" id="UPA00275">
    <property type="reaction ID" value="UER00404"/>
</dbReference>
<dbReference type="Proteomes" id="UP000001485">
    <property type="component" value="Chromosome"/>
</dbReference>
<dbReference type="GO" id="GO:0005829">
    <property type="term" value="C:cytosol"/>
    <property type="evidence" value="ECO:0007669"/>
    <property type="project" value="TreeGrafter"/>
</dbReference>
<dbReference type="GO" id="GO:0009349">
    <property type="term" value="C:riboflavin synthase complex"/>
    <property type="evidence" value="ECO:0007669"/>
    <property type="project" value="InterPro"/>
</dbReference>
<dbReference type="GO" id="GO:0000906">
    <property type="term" value="F:6,7-dimethyl-8-ribityllumazine synthase activity"/>
    <property type="evidence" value="ECO:0007669"/>
    <property type="project" value="UniProtKB-UniRule"/>
</dbReference>
<dbReference type="GO" id="GO:0009231">
    <property type="term" value="P:riboflavin biosynthetic process"/>
    <property type="evidence" value="ECO:0007669"/>
    <property type="project" value="UniProtKB-UniRule"/>
</dbReference>
<dbReference type="CDD" id="cd09209">
    <property type="entry name" value="Lumazine_synthase-I"/>
    <property type="match status" value="1"/>
</dbReference>
<dbReference type="FunFam" id="3.40.50.960:FF:000001">
    <property type="entry name" value="6,7-dimethyl-8-ribityllumazine synthase"/>
    <property type="match status" value="1"/>
</dbReference>
<dbReference type="Gene3D" id="3.40.50.960">
    <property type="entry name" value="Lumazine/riboflavin synthase"/>
    <property type="match status" value="1"/>
</dbReference>
<dbReference type="HAMAP" id="MF_00178">
    <property type="entry name" value="Lumazine_synth"/>
    <property type="match status" value="1"/>
</dbReference>
<dbReference type="InterPro" id="IPR034964">
    <property type="entry name" value="LS"/>
</dbReference>
<dbReference type="InterPro" id="IPR002180">
    <property type="entry name" value="LS/RS"/>
</dbReference>
<dbReference type="InterPro" id="IPR036467">
    <property type="entry name" value="LS/RS_sf"/>
</dbReference>
<dbReference type="NCBIfam" id="TIGR00114">
    <property type="entry name" value="lumazine-synth"/>
    <property type="match status" value="1"/>
</dbReference>
<dbReference type="NCBIfam" id="NF000812">
    <property type="entry name" value="PRK00061.1-4"/>
    <property type="match status" value="1"/>
</dbReference>
<dbReference type="PANTHER" id="PTHR21058:SF0">
    <property type="entry name" value="6,7-DIMETHYL-8-RIBITYLLUMAZINE SYNTHASE"/>
    <property type="match status" value="1"/>
</dbReference>
<dbReference type="PANTHER" id="PTHR21058">
    <property type="entry name" value="6,7-DIMETHYL-8-RIBITYLLUMAZINE SYNTHASE DMRL SYNTHASE LUMAZINE SYNTHASE"/>
    <property type="match status" value="1"/>
</dbReference>
<dbReference type="Pfam" id="PF00885">
    <property type="entry name" value="DMRL_synthase"/>
    <property type="match status" value="1"/>
</dbReference>
<dbReference type="SUPFAM" id="SSF52121">
    <property type="entry name" value="Lumazine synthase"/>
    <property type="match status" value="1"/>
</dbReference>
<accession>C5BCH5</accession>
<comment type="function">
    <text evidence="1">Catalyzes the formation of 6,7-dimethyl-8-ribityllumazine by condensation of 5-amino-6-(D-ribitylamino)uracil with 3,4-dihydroxy-2-butanone 4-phosphate. This is the penultimate step in the biosynthesis of riboflavin.</text>
</comment>
<comment type="catalytic activity">
    <reaction evidence="1">
        <text>(2S)-2-hydroxy-3-oxobutyl phosphate + 5-amino-6-(D-ribitylamino)uracil = 6,7-dimethyl-8-(1-D-ribityl)lumazine + phosphate + 2 H2O + H(+)</text>
        <dbReference type="Rhea" id="RHEA:26152"/>
        <dbReference type="ChEBI" id="CHEBI:15377"/>
        <dbReference type="ChEBI" id="CHEBI:15378"/>
        <dbReference type="ChEBI" id="CHEBI:15934"/>
        <dbReference type="ChEBI" id="CHEBI:43474"/>
        <dbReference type="ChEBI" id="CHEBI:58201"/>
        <dbReference type="ChEBI" id="CHEBI:58830"/>
        <dbReference type="EC" id="2.5.1.78"/>
    </reaction>
</comment>
<comment type="pathway">
    <text evidence="1">Cofactor biosynthesis; riboflavin biosynthesis; riboflavin from 2-hydroxy-3-oxobutyl phosphate and 5-amino-6-(D-ribitylamino)uracil: step 1/2.</text>
</comment>
<comment type="subunit">
    <text evidence="1">Forms an icosahedral capsid composed of 60 subunits, arranged as a dodecamer of pentamers.</text>
</comment>
<comment type="similarity">
    <text evidence="1">Belongs to the DMRL synthase family.</text>
</comment>
<proteinExistence type="inferred from homology"/>
<name>RISB_EDWI9</name>